<evidence type="ECO:0000250" key="1"/>
<evidence type="ECO:0000255" key="2"/>
<evidence type="ECO:0000269" key="3">
    <source>
    </source>
</evidence>
<evidence type="ECO:0000269" key="4">
    <source>
    </source>
</evidence>
<evidence type="ECO:0000269" key="5">
    <source>
    </source>
</evidence>
<evidence type="ECO:0000269" key="6">
    <source>
    </source>
</evidence>
<evidence type="ECO:0000305" key="7"/>
<evidence type="ECO:0007744" key="8">
    <source>
        <dbReference type="PDB" id="3BWD"/>
    </source>
</evidence>
<evidence type="ECO:0007829" key="9">
    <source>
        <dbReference type="PDB" id="3BWD"/>
    </source>
</evidence>
<proteinExistence type="evidence at protein level"/>
<gene>
    <name type="primary">ARAC6</name>
    <name type="synonym">RAC2</name>
    <name type="synonym">ROP5</name>
    <name type="ordered locus">At4g35950</name>
    <name type="ORF">F4B14_220</name>
    <name type="ORF">T19K4.80</name>
</gene>
<accession>Q9SBJ6</accession>
<accession>O65632</accession>
<name>RAC6_ARATH</name>
<reference key="1">
    <citation type="journal article" date="1999" name="J. Cell Biol.">
        <title>Rac homologues and compartmentalized phosphatidylinositol 4, 5-bisphosphate act in a common pathway to regulate polar pollen tube growth.</title>
        <authorList>
            <person name="Kost B."/>
            <person name="Lemichez E."/>
            <person name="Spielhofer P."/>
            <person name="Hong Y."/>
            <person name="Tolias K."/>
            <person name="Carpenter C."/>
            <person name="Chua N.-H."/>
        </authorList>
    </citation>
    <scope>NUCLEOTIDE SEQUENCE [MRNA]</scope>
    <scope>FUNCTION</scope>
    <scope>TISSUE SPECIFICITY</scope>
</reference>
<reference key="2">
    <citation type="journal article" date="2000" name="Genetics">
        <title>Genetic structure and evolution of RAC-GTPases in Arabidopsis thaliana.</title>
        <authorList>
            <person name="Winge P."/>
            <person name="Brembu T."/>
            <person name="Kristensen R."/>
            <person name="Bones A.M."/>
        </authorList>
    </citation>
    <scope>NUCLEOTIDE SEQUENCE [MRNA]</scope>
    <source>
        <strain>cv. Columbia</strain>
        <strain>cv. Landsberg erecta</strain>
    </source>
</reference>
<reference key="3">
    <citation type="journal article" date="1999" name="Nature">
        <title>Sequence and analysis of chromosome 4 of the plant Arabidopsis thaliana.</title>
        <authorList>
            <person name="Mayer K.F.X."/>
            <person name="Schueller C."/>
            <person name="Wambutt R."/>
            <person name="Murphy G."/>
            <person name="Volckaert G."/>
            <person name="Pohl T."/>
            <person name="Duesterhoeft A."/>
            <person name="Stiekema W."/>
            <person name="Entian K.-D."/>
            <person name="Terryn N."/>
            <person name="Harris B."/>
            <person name="Ansorge W."/>
            <person name="Brandt P."/>
            <person name="Grivell L.A."/>
            <person name="Rieger M."/>
            <person name="Weichselgartner M."/>
            <person name="de Simone V."/>
            <person name="Obermaier B."/>
            <person name="Mache R."/>
            <person name="Mueller M."/>
            <person name="Kreis M."/>
            <person name="Delseny M."/>
            <person name="Puigdomenech P."/>
            <person name="Watson M."/>
            <person name="Schmidtheini T."/>
            <person name="Reichert B."/>
            <person name="Portetelle D."/>
            <person name="Perez-Alonso M."/>
            <person name="Boutry M."/>
            <person name="Bancroft I."/>
            <person name="Vos P."/>
            <person name="Hoheisel J."/>
            <person name="Zimmermann W."/>
            <person name="Wedler H."/>
            <person name="Ridley P."/>
            <person name="Langham S.-A."/>
            <person name="McCullagh B."/>
            <person name="Bilham L."/>
            <person name="Robben J."/>
            <person name="van der Schueren J."/>
            <person name="Grymonprez B."/>
            <person name="Chuang Y.-J."/>
            <person name="Vandenbussche F."/>
            <person name="Braeken M."/>
            <person name="Weltjens I."/>
            <person name="Voet M."/>
            <person name="Bastiaens I."/>
            <person name="Aert R."/>
            <person name="Defoor E."/>
            <person name="Weitzenegger T."/>
            <person name="Bothe G."/>
            <person name="Ramsperger U."/>
            <person name="Hilbert H."/>
            <person name="Braun M."/>
            <person name="Holzer E."/>
            <person name="Brandt A."/>
            <person name="Peters S."/>
            <person name="van Staveren M."/>
            <person name="Dirkse W."/>
            <person name="Mooijman P."/>
            <person name="Klein Lankhorst R."/>
            <person name="Rose M."/>
            <person name="Hauf J."/>
            <person name="Koetter P."/>
            <person name="Berneiser S."/>
            <person name="Hempel S."/>
            <person name="Feldpausch M."/>
            <person name="Lamberth S."/>
            <person name="Van den Daele H."/>
            <person name="De Keyser A."/>
            <person name="Buysshaert C."/>
            <person name="Gielen J."/>
            <person name="Villarroel R."/>
            <person name="De Clercq R."/>
            <person name="van Montagu M."/>
            <person name="Rogers J."/>
            <person name="Cronin A."/>
            <person name="Quail M.A."/>
            <person name="Bray-Allen S."/>
            <person name="Clark L."/>
            <person name="Doggett J."/>
            <person name="Hall S."/>
            <person name="Kay M."/>
            <person name="Lennard N."/>
            <person name="McLay K."/>
            <person name="Mayes R."/>
            <person name="Pettett A."/>
            <person name="Rajandream M.A."/>
            <person name="Lyne M."/>
            <person name="Benes V."/>
            <person name="Rechmann S."/>
            <person name="Borkova D."/>
            <person name="Bloecker H."/>
            <person name="Scharfe M."/>
            <person name="Grimm M."/>
            <person name="Loehnert T.-H."/>
            <person name="Dose S."/>
            <person name="de Haan M."/>
            <person name="Maarse A.C."/>
            <person name="Schaefer M."/>
            <person name="Mueller-Auer S."/>
            <person name="Gabel C."/>
            <person name="Fuchs M."/>
            <person name="Fartmann B."/>
            <person name="Granderath K."/>
            <person name="Dauner D."/>
            <person name="Herzl A."/>
            <person name="Neumann S."/>
            <person name="Argiriou A."/>
            <person name="Vitale D."/>
            <person name="Liguori R."/>
            <person name="Piravandi E."/>
            <person name="Massenet O."/>
            <person name="Quigley F."/>
            <person name="Clabauld G."/>
            <person name="Muendlein A."/>
            <person name="Felber R."/>
            <person name="Schnabl S."/>
            <person name="Hiller R."/>
            <person name="Schmidt W."/>
            <person name="Lecharny A."/>
            <person name="Aubourg S."/>
            <person name="Chefdor F."/>
            <person name="Cooke R."/>
            <person name="Berger C."/>
            <person name="Monfort A."/>
            <person name="Casacuberta E."/>
            <person name="Gibbons T."/>
            <person name="Weber N."/>
            <person name="Vandenbol M."/>
            <person name="Bargues M."/>
            <person name="Terol J."/>
            <person name="Torres A."/>
            <person name="Perez-Perez A."/>
            <person name="Purnelle B."/>
            <person name="Bent E."/>
            <person name="Johnson S."/>
            <person name="Tacon D."/>
            <person name="Jesse T."/>
            <person name="Heijnen L."/>
            <person name="Schwarz S."/>
            <person name="Scholler P."/>
            <person name="Heber S."/>
            <person name="Francs P."/>
            <person name="Bielke C."/>
            <person name="Frishman D."/>
            <person name="Haase D."/>
            <person name="Lemcke K."/>
            <person name="Mewes H.-W."/>
            <person name="Stocker S."/>
            <person name="Zaccaria P."/>
            <person name="Bevan M."/>
            <person name="Wilson R.K."/>
            <person name="de la Bastide M."/>
            <person name="Habermann K."/>
            <person name="Parnell L."/>
            <person name="Dedhia N."/>
            <person name="Gnoj L."/>
            <person name="Schutz K."/>
            <person name="Huang E."/>
            <person name="Spiegel L."/>
            <person name="Sekhon M."/>
            <person name="Murray J."/>
            <person name="Sheet P."/>
            <person name="Cordes M."/>
            <person name="Abu-Threideh J."/>
            <person name="Stoneking T."/>
            <person name="Kalicki J."/>
            <person name="Graves T."/>
            <person name="Harmon G."/>
            <person name="Edwards J."/>
            <person name="Latreille P."/>
            <person name="Courtney L."/>
            <person name="Cloud J."/>
            <person name="Abbott A."/>
            <person name="Scott K."/>
            <person name="Johnson D."/>
            <person name="Minx P."/>
            <person name="Bentley D."/>
            <person name="Fulton B."/>
            <person name="Miller N."/>
            <person name="Greco T."/>
            <person name="Kemp K."/>
            <person name="Kramer J."/>
            <person name="Fulton L."/>
            <person name="Mardis E."/>
            <person name="Dante M."/>
            <person name="Pepin K."/>
            <person name="Hillier L.W."/>
            <person name="Nelson J."/>
            <person name="Spieth J."/>
            <person name="Ryan E."/>
            <person name="Andrews S."/>
            <person name="Geisel C."/>
            <person name="Layman D."/>
            <person name="Du H."/>
            <person name="Ali J."/>
            <person name="Berghoff A."/>
            <person name="Jones K."/>
            <person name="Drone K."/>
            <person name="Cotton M."/>
            <person name="Joshu C."/>
            <person name="Antonoiu B."/>
            <person name="Zidanic M."/>
            <person name="Strong C."/>
            <person name="Sun H."/>
            <person name="Lamar B."/>
            <person name="Yordan C."/>
            <person name="Ma P."/>
            <person name="Zhong J."/>
            <person name="Preston R."/>
            <person name="Vil D."/>
            <person name="Shekher M."/>
            <person name="Matero A."/>
            <person name="Shah R."/>
            <person name="Swaby I.K."/>
            <person name="O'Shaughnessy A."/>
            <person name="Rodriguez M."/>
            <person name="Hoffman J."/>
            <person name="Till S."/>
            <person name="Granat S."/>
            <person name="Shohdy N."/>
            <person name="Hasegawa A."/>
            <person name="Hameed A."/>
            <person name="Lodhi M."/>
            <person name="Johnson A."/>
            <person name="Chen E."/>
            <person name="Marra M.A."/>
            <person name="Martienssen R."/>
            <person name="McCombie W.R."/>
        </authorList>
    </citation>
    <scope>NUCLEOTIDE SEQUENCE [LARGE SCALE GENOMIC DNA]</scope>
    <source>
        <strain>cv. Columbia</strain>
    </source>
</reference>
<reference key="4">
    <citation type="journal article" date="2017" name="Plant J.">
        <title>Araport11: a complete reannotation of the Arabidopsis thaliana reference genome.</title>
        <authorList>
            <person name="Cheng C.Y."/>
            <person name="Krishnakumar V."/>
            <person name="Chan A.P."/>
            <person name="Thibaud-Nissen F."/>
            <person name="Schobel S."/>
            <person name="Town C.D."/>
        </authorList>
    </citation>
    <scope>GENOME REANNOTATION</scope>
    <source>
        <strain>cv. Columbia</strain>
    </source>
</reference>
<reference key="5">
    <citation type="journal article" date="2002" name="Science">
        <title>Functional annotation of a full-length Arabidopsis cDNA collection.</title>
        <authorList>
            <person name="Seki M."/>
            <person name="Narusaka M."/>
            <person name="Kamiya A."/>
            <person name="Ishida J."/>
            <person name="Satou M."/>
            <person name="Sakurai T."/>
            <person name="Nakajima M."/>
            <person name="Enju A."/>
            <person name="Akiyama K."/>
            <person name="Oono Y."/>
            <person name="Muramatsu M."/>
            <person name="Hayashizaki Y."/>
            <person name="Kawai J."/>
            <person name="Carninci P."/>
            <person name="Itoh M."/>
            <person name="Ishii Y."/>
            <person name="Arakawa T."/>
            <person name="Shibata K."/>
            <person name="Shinagawa A."/>
            <person name="Shinozaki K."/>
        </authorList>
    </citation>
    <scope>NUCLEOTIDE SEQUENCE [LARGE SCALE MRNA]</scope>
    <source>
        <strain>cv. Columbia</strain>
    </source>
</reference>
<reference key="6">
    <citation type="journal article" date="2003" name="Science">
        <title>Empirical analysis of transcriptional activity in the Arabidopsis genome.</title>
        <authorList>
            <person name="Yamada K."/>
            <person name="Lim J."/>
            <person name="Dale J.M."/>
            <person name="Chen H."/>
            <person name="Shinn P."/>
            <person name="Palm C.J."/>
            <person name="Southwick A.M."/>
            <person name="Wu H.C."/>
            <person name="Kim C.J."/>
            <person name="Nguyen M."/>
            <person name="Pham P.K."/>
            <person name="Cheuk R.F."/>
            <person name="Karlin-Newmann G."/>
            <person name="Liu S.X."/>
            <person name="Lam B."/>
            <person name="Sakano H."/>
            <person name="Wu T."/>
            <person name="Yu G."/>
            <person name="Miranda M."/>
            <person name="Quach H.L."/>
            <person name="Tripp M."/>
            <person name="Chang C.H."/>
            <person name="Lee J.M."/>
            <person name="Toriumi M.J."/>
            <person name="Chan M.M."/>
            <person name="Tang C.C."/>
            <person name="Onodera C.S."/>
            <person name="Deng J.M."/>
            <person name="Akiyama K."/>
            <person name="Ansari Y."/>
            <person name="Arakawa T."/>
            <person name="Banh J."/>
            <person name="Banno F."/>
            <person name="Bowser L."/>
            <person name="Brooks S.Y."/>
            <person name="Carninci P."/>
            <person name="Chao Q."/>
            <person name="Choy N."/>
            <person name="Enju A."/>
            <person name="Goldsmith A.D."/>
            <person name="Gurjal M."/>
            <person name="Hansen N.F."/>
            <person name="Hayashizaki Y."/>
            <person name="Johnson-Hopson C."/>
            <person name="Hsuan V.W."/>
            <person name="Iida K."/>
            <person name="Karnes M."/>
            <person name="Khan S."/>
            <person name="Koesema E."/>
            <person name="Ishida J."/>
            <person name="Jiang P.X."/>
            <person name="Jones T."/>
            <person name="Kawai J."/>
            <person name="Kamiya A."/>
            <person name="Meyers C."/>
            <person name="Nakajima M."/>
            <person name="Narusaka M."/>
            <person name="Seki M."/>
            <person name="Sakurai T."/>
            <person name="Satou M."/>
            <person name="Tamse R."/>
            <person name="Vaysberg M."/>
            <person name="Wallender E.K."/>
            <person name="Wong C."/>
            <person name="Yamamura Y."/>
            <person name="Yuan S."/>
            <person name="Shinozaki K."/>
            <person name="Davis R.W."/>
            <person name="Theologis A."/>
            <person name="Ecker J.R."/>
        </authorList>
    </citation>
    <scope>NUCLEOTIDE SEQUENCE [LARGE SCALE MRNA]</scope>
    <source>
        <strain>cv. Columbia</strain>
    </source>
</reference>
<reference key="7">
    <citation type="submission" date="2002-03" db="EMBL/GenBank/DDBJ databases">
        <title>Full-length cDNA from Arabidopsis thaliana.</title>
        <authorList>
            <person name="Brover V.V."/>
            <person name="Troukhan M.E."/>
            <person name="Alexandrov N.A."/>
            <person name="Lu Y.-P."/>
            <person name="Flavell R.B."/>
            <person name="Feldmann K.A."/>
        </authorList>
    </citation>
    <scope>NUCLEOTIDE SEQUENCE [LARGE SCALE MRNA]</scope>
</reference>
<reference key="8">
    <citation type="journal article" date="1998" name="Plant Physiol.">
        <title>Arabidopsis Rho-related GTPases: differential gene expression in pollen and polar localization in fission yeast.</title>
        <authorList>
            <person name="Li H."/>
            <person name="Wu G."/>
            <person name="Ware D."/>
            <person name="Davis K.R."/>
            <person name="Yang Z."/>
        </authorList>
    </citation>
    <scope>NUCLEOTIDE SEQUENCE [GENOMIC DNA] OF 1-99</scope>
    <scope>FUNCTION</scope>
    <scope>TISSUE SPECIFICITY</scope>
    <source>
        <strain>cv. Columbia</strain>
    </source>
</reference>
<reference key="9">
    <citation type="journal article" date="2007" name="Development">
        <title>The role of Arabidopsis SCAR genes in ARP2-ARP3-dependent cell morphogenesis.</title>
        <authorList>
            <person name="Uhrig J.F."/>
            <person name="Mutondo M."/>
            <person name="Zimmermann I."/>
            <person name="Deeks M.J."/>
            <person name="Machesky L.M."/>
            <person name="Thomas P."/>
            <person name="Uhrig S."/>
            <person name="Rambke C."/>
            <person name="Hussey P.J."/>
            <person name="Huelskamp M."/>
        </authorList>
    </citation>
    <scope>INTERACTION WITH SPK1</scope>
</reference>
<reference key="10">
    <citation type="journal article" date="2008" name="Proc. Natl. Acad. Sci. U.S.A.">
        <title>A SPIKE1 signaling complex controls actin-dependent cell morphogenesis through the heteromeric WAVE and ARP2/3 complexes.</title>
        <authorList>
            <person name="Basu D."/>
            <person name="Le J."/>
            <person name="Zakharova T."/>
            <person name="Mallery E.L."/>
            <person name="Szymanski D.B."/>
        </authorList>
    </citation>
    <scope>INTERACTION WITH SPK1</scope>
    <source>
        <strain>cv. Columbia</strain>
    </source>
</reference>
<reference key="11">
    <citation type="submission" date="2008-01" db="PDB data bank">
        <title>Crystal structure of the plant Rho protein ROP5.</title>
        <authorList>
            <person name="Thomas C."/>
            <person name="Berken A."/>
        </authorList>
    </citation>
    <scope>X-RAY CRYSTALLOGRAPHY (1.53 ANGSTROMS) OF 1-180 IN COMPLEX WITH GDP</scope>
</reference>
<comment type="function">
    <text evidence="3 6">May be involved in cell polarity control during the actin-dependent tip growth of pollen tubes.</text>
</comment>
<comment type="function">
    <text evidence="1">Inactive GDP-bound Rho GTPases reside in the cytosol, are found in a complex with Rho GDP-dissociation inhibitors (Rho GDIs), and are released from the GDI protein in order to translocate to membranes upon activation.</text>
</comment>
<comment type="subunit">
    <text evidence="4 5">Interacts with SPK1.</text>
</comment>
<comment type="interaction">
    <interactant intactId="EBI-1548024">
        <id>Q9SBJ6</id>
    </interactant>
    <interactant intactId="EBI-1547917">
        <id>Q8SAB7</id>
        <label>SPK1</label>
    </interactant>
    <organismsDiffer>false</organismsDiffer>
    <experiments>2</experiments>
</comment>
<comment type="subcellular location">
    <subcellularLocation>
        <location evidence="1">Cytoplasm</location>
    </subcellularLocation>
    <subcellularLocation>
        <location evidence="1">Membrane</location>
        <topology evidence="1">Peripheral membrane protein</topology>
    </subcellularLocation>
    <text>Associated with the membrane when activated.</text>
</comment>
<comment type="tissue specificity">
    <text evidence="3 6">Ubiquitous. Preferentially expressed in mature pollen and pollen tubes.</text>
</comment>
<comment type="similarity">
    <text evidence="7">Belongs to the small GTPase superfamily. Rho family.</text>
</comment>
<feature type="chain" id="PRO_0000198920" description="Rac-like GTP-binding protein ARAC6">
    <location>
        <begin position="1"/>
        <end position="194"/>
    </location>
</feature>
<feature type="propeptide" id="PRO_0000227585" description="Removed in mature form" evidence="2">
    <location>
        <begin position="195"/>
        <end position="197"/>
    </location>
</feature>
<feature type="short sequence motif" description="Effector region" evidence="2">
    <location>
        <begin position="35"/>
        <end position="43"/>
    </location>
</feature>
<feature type="binding site" evidence="8">
    <location>
        <begin position="13"/>
        <end position="20"/>
    </location>
    <ligand>
        <name>GTP</name>
        <dbReference type="ChEBI" id="CHEBI:37565"/>
    </ligand>
</feature>
<feature type="binding site" evidence="1">
    <location>
        <begin position="60"/>
        <end position="64"/>
    </location>
    <ligand>
        <name>GTP</name>
        <dbReference type="ChEBI" id="CHEBI:37565"/>
    </ligand>
</feature>
<feature type="binding site" evidence="8">
    <location>
        <begin position="118"/>
        <end position="121"/>
    </location>
    <ligand>
        <name>GTP</name>
        <dbReference type="ChEBI" id="CHEBI:37565"/>
    </ligand>
</feature>
<feature type="binding site" evidence="8">
    <location>
        <position position="160"/>
    </location>
    <ligand>
        <name>GDP</name>
        <dbReference type="ChEBI" id="CHEBI:58189"/>
    </ligand>
</feature>
<feature type="modified residue" description="Cysteine methyl ester" evidence="2">
    <location>
        <position position="194"/>
    </location>
</feature>
<feature type="lipid moiety-binding region" description="S-geranylgeranyl cysteine" evidence="2">
    <location>
        <position position="194"/>
    </location>
</feature>
<feature type="strand" evidence="9">
    <location>
        <begin position="8"/>
        <end position="12"/>
    </location>
</feature>
<feature type="helix" evidence="9">
    <location>
        <begin position="19"/>
        <end position="28"/>
    </location>
</feature>
<feature type="strand" evidence="9">
    <location>
        <begin position="57"/>
        <end position="59"/>
    </location>
</feature>
<feature type="turn" evidence="9">
    <location>
        <begin position="66"/>
        <end position="70"/>
    </location>
</feature>
<feature type="helix" evidence="9">
    <location>
        <begin position="71"/>
        <end position="75"/>
    </location>
</feature>
<feature type="strand" evidence="9">
    <location>
        <begin position="79"/>
        <end position="86"/>
    </location>
</feature>
<feature type="helix" evidence="9">
    <location>
        <begin position="90"/>
        <end position="98"/>
    </location>
</feature>
<feature type="helix" evidence="9">
    <location>
        <begin position="100"/>
        <end position="107"/>
    </location>
</feature>
<feature type="strand" evidence="9">
    <location>
        <begin position="113"/>
        <end position="118"/>
    </location>
</feature>
<feature type="helix" evidence="9">
    <location>
        <begin position="120"/>
        <end position="123"/>
    </location>
</feature>
<feature type="helix" evidence="9">
    <location>
        <begin position="126"/>
        <end position="131"/>
    </location>
</feature>
<feature type="helix" evidence="9">
    <location>
        <begin position="140"/>
        <end position="150"/>
    </location>
</feature>
<feature type="strand" evidence="9">
    <location>
        <begin position="153"/>
        <end position="157"/>
    </location>
</feature>
<feature type="turn" evidence="9">
    <location>
        <begin position="160"/>
        <end position="162"/>
    </location>
</feature>
<feature type="helix" evidence="9">
    <location>
        <begin position="166"/>
        <end position="177"/>
    </location>
</feature>
<sequence>MSASRFIKCVTVGDGAVGKTCLLISYTSNTFPTDYVPTVFDNFSANVVVNGATVNLGLWDTAGQEDYNRLRPLSYRGADVFILAFSLISKASYENVSKKWIPELKHYAPGVPIVLVGTKLDLRDDKQFFIDHPGAVPITTVQGEELKKLIGAPAYIECSSKSQENVKGVFDAAIRVVLQPPKQKKKKNKAQKACSIL</sequence>
<protein>
    <recommendedName>
        <fullName>Rac-like GTP-binding protein ARAC6</fullName>
    </recommendedName>
    <alternativeName>
        <fullName>GTPase protein ROP5</fullName>
    </alternativeName>
</protein>
<dbReference type="EMBL" id="AF107663">
    <property type="protein sequence ID" value="AAD17999.1"/>
    <property type="molecule type" value="mRNA"/>
</dbReference>
<dbReference type="EMBL" id="AF079487">
    <property type="protein sequence ID" value="AAC29480.1"/>
    <property type="molecule type" value="mRNA"/>
</dbReference>
<dbReference type="EMBL" id="AF115473">
    <property type="protein sequence ID" value="AAF40245.1"/>
    <property type="molecule type" value="Genomic_DNA"/>
</dbReference>
<dbReference type="EMBL" id="AL022373">
    <property type="protein sequence ID" value="CAA18489.1"/>
    <property type="molecule type" value="Genomic_DNA"/>
</dbReference>
<dbReference type="EMBL" id="AL031986">
    <property type="protein sequence ID" value="CAA21481.1"/>
    <property type="molecule type" value="Genomic_DNA"/>
</dbReference>
<dbReference type="EMBL" id="AL161588">
    <property type="protein sequence ID" value="CAB81504.1"/>
    <property type="molecule type" value="Genomic_DNA"/>
</dbReference>
<dbReference type="EMBL" id="CP002687">
    <property type="protein sequence ID" value="AEE86595.1"/>
    <property type="molecule type" value="Genomic_DNA"/>
</dbReference>
<dbReference type="EMBL" id="AK117209">
    <property type="protein sequence ID" value="BAC41885.1"/>
    <property type="molecule type" value="mRNA"/>
</dbReference>
<dbReference type="EMBL" id="BT005217">
    <property type="protein sequence ID" value="AAO63281.1"/>
    <property type="molecule type" value="mRNA"/>
</dbReference>
<dbReference type="EMBL" id="AY087336">
    <property type="protein sequence ID" value="AAM64886.1"/>
    <property type="molecule type" value="mRNA"/>
</dbReference>
<dbReference type="EMBL" id="AF031429">
    <property type="protein sequence ID" value="AAB87673.1"/>
    <property type="molecule type" value="Genomic_DNA"/>
</dbReference>
<dbReference type="PIR" id="T04705">
    <property type="entry name" value="T04705"/>
</dbReference>
<dbReference type="RefSeq" id="NP_195320.1">
    <property type="nucleotide sequence ID" value="NM_119762.4"/>
</dbReference>
<dbReference type="PDB" id="3BWD">
    <property type="method" value="X-ray"/>
    <property type="resolution" value="1.53 A"/>
    <property type="chains" value="D=1-180"/>
</dbReference>
<dbReference type="PDBsum" id="3BWD"/>
<dbReference type="SMR" id="Q9SBJ6"/>
<dbReference type="BioGRID" id="15032">
    <property type="interactions" value="29"/>
</dbReference>
<dbReference type="DIP" id="DIP-29821N"/>
<dbReference type="FunCoup" id="Q9SBJ6">
    <property type="interactions" value="3034"/>
</dbReference>
<dbReference type="IntAct" id="Q9SBJ6">
    <property type="interactions" value="6"/>
</dbReference>
<dbReference type="STRING" id="3702.Q9SBJ6"/>
<dbReference type="PaxDb" id="3702-AT4G35950.1"/>
<dbReference type="ProteomicsDB" id="236398"/>
<dbReference type="EnsemblPlants" id="AT4G35950.1">
    <property type="protein sequence ID" value="AT4G35950.1"/>
    <property type="gene ID" value="AT4G35950"/>
</dbReference>
<dbReference type="GeneID" id="829750"/>
<dbReference type="Gramene" id="AT4G35950.1">
    <property type="protein sequence ID" value="AT4G35950.1"/>
    <property type="gene ID" value="AT4G35950"/>
</dbReference>
<dbReference type="KEGG" id="ath:AT4G35950"/>
<dbReference type="Araport" id="AT4G35950"/>
<dbReference type="TAIR" id="AT4G35950">
    <property type="gene designation" value="RAC6"/>
</dbReference>
<dbReference type="eggNOG" id="KOG0393">
    <property type="taxonomic scope" value="Eukaryota"/>
</dbReference>
<dbReference type="HOGENOM" id="CLU_041217_21_3_1"/>
<dbReference type="InParanoid" id="Q9SBJ6"/>
<dbReference type="OMA" id="ARMNCKE"/>
<dbReference type="OrthoDB" id="1059378at2759"/>
<dbReference type="PhylomeDB" id="Q9SBJ6"/>
<dbReference type="EvolutionaryTrace" id="Q9SBJ6"/>
<dbReference type="PRO" id="PR:Q9SBJ6"/>
<dbReference type="Proteomes" id="UP000006548">
    <property type="component" value="Chromosome 4"/>
</dbReference>
<dbReference type="ExpressionAtlas" id="Q9SBJ6">
    <property type="expression patterns" value="baseline and differential"/>
</dbReference>
<dbReference type="GO" id="GO:0005737">
    <property type="term" value="C:cytoplasm"/>
    <property type="evidence" value="ECO:0007005"/>
    <property type="project" value="TAIR"/>
</dbReference>
<dbReference type="GO" id="GO:0016020">
    <property type="term" value="C:membrane"/>
    <property type="evidence" value="ECO:0007669"/>
    <property type="project" value="UniProtKB-SubCell"/>
</dbReference>
<dbReference type="GO" id="GO:0005634">
    <property type="term" value="C:nucleus"/>
    <property type="evidence" value="ECO:0007005"/>
    <property type="project" value="TAIR"/>
</dbReference>
<dbReference type="GO" id="GO:0005525">
    <property type="term" value="F:GTP binding"/>
    <property type="evidence" value="ECO:0007669"/>
    <property type="project" value="UniProtKB-KW"/>
</dbReference>
<dbReference type="GO" id="GO:0003924">
    <property type="term" value="F:GTPase activity"/>
    <property type="evidence" value="ECO:0007669"/>
    <property type="project" value="InterPro"/>
</dbReference>
<dbReference type="GO" id="GO:0007264">
    <property type="term" value="P:small GTPase-mediated signal transduction"/>
    <property type="evidence" value="ECO:0007669"/>
    <property type="project" value="InterPro"/>
</dbReference>
<dbReference type="CDD" id="cd04133">
    <property type="entry name" value="Rop_like"/>
    <property type="match status" value="1"/>
</dbReference>
<dbReference type="FunFam" id="3.40.50.300:FF:000336">
    <property type="entry name" value="rac-like GTP-binding protein RHO1"/>
    <property type="match status" value="1"/>
</dbReference>
<dbReference type="Gene3D" id="3.40.50.300">
    <property type="entry name" value="P-loop containing nucleotide triphosphate hydrolases"/>
    <property type="match status" value="1"/>
</dbReference>
<dbReference type="InterPro" id="IPR027417">
    <property type="entry name" value="P-loop_NTPase"/>
</dbReference>
<dbReference type="InterPro" id="IPR005225">
    <property type="entry name" value="Small_GTP-bd"/>
</dbReference>
<dbReference type="InterPro" id="IPR001806">
    <property type="entry name" value="Small_GTPase"/>
</dbReference>
<dbReference type="InterPro" id="IPR003578">
    <property type="entry name" value="Small_GTPase_Rho"/>
</dbReference>
<dbReference type="NCBIfam" id="TIGR00231">
    <property type="entry name" value="small_GTP"/>
    <property type="match status" value="1"/>
</dbReference>
<dbReference type="PANTHER" id="PTHR24072">
    <property type="entry name" value="RHO FAMILY GTPASE"/>
    <property type="match status" value="1"/>
</dbReference>
<dbReference type="Pfam" id="PF00071">
    <property type="entry name" value="Ras"/>
    <property type="match status" value="1"/>
</dbReference>
<dbReference type="PRINTS" id="PR00449">
    <property type="entry name" value="RASTRNSFRMNG"/>
</dbReference>
<dbReference type="SMART" id="SM00175">
    <property type="entry name" value="RAB"/>
    <property type="match status" value="1"/>
</dbReference>
<dbReference type="SMART" id="SM00173">
    <property type="entry name" value="RAS"/>
    <property type="match status" value="1"/>
</dbReference>
<dbReference type="SMART" id="SM00174">
    <property type="entry name" value="RHO"/>
    <property type="match status" value="1"/>
</dbReference>
<dbReference type="SUPFAM" id="SSF52540">
    <property type="entry name" value="P-loop containing nucleoside triphosphate hydrolases"/>
    <property type="match status" value="1"/>
</dbReference>
<dbReference type="PROSITE" id="PS51420">
    <property type="entry name" value="RHO"/>
    <property type="match status" value="1"/>
</dbReference>
<keyword id="KW-0002">3D-structure</keyword>
<keyword id="KW-0963">Cytoplasm</keyword>
<keyword id="KW-0342">GTP-binding</keyword>
<keyword id="KW-0449">Lipoprotein</keyword>
<keyword id="KW-0472">Membrane</keyword>
<keyword id="KW-0488">Methylation</keyword>
<keyword id="KW-0547">Nucleotide-binding</keyword>
<keyword id="KW-0636">Prenylation</keyword>
<keyword id="KW-1185">Reference proteome</keyword>
<organism>
    <name type="scientific">Arabidopsis thaliana</name>
    <name type="common">Mouse-ear cress</name>
    <dbReference type="NCBI Taxonomy" id="3702"/>
    <lineage>
        <taxon>Eukaryota</taxon>
        <taxon>Viridiplantae</taxon>
        <taxon>Streptophyta</taxon>
        <taxon>Embryophyta</taxon>
        <taxon>Tracheophyta</taxon>
        <taxon>Spermatophyta</taxon>
        <taxon>Magnoliopsida</taxon>
        <taxon>eudicotyledons</taxon>
        <taxon>Gunneridae</taxon>
        <taxon>Pentapetalae</taxon>
        <taxon>rosids</taxon>
        <taxon>malvids</taxon>
        <taxon>Brassicales</taxon>
        <taxon>Brassicaceae</taxon>
        <taxon>Camelineae</taxon>
        <taxon>Arabidopsis</taxon>
    </lineage>
</organism>